<feature type="chain" id="PRO_1000136009" description="Probable phosphoglycerate mutase GpmB">
    <location>
        <begin position="1"/>
        <end position="215"/>
    </location>
</feature>
<feature type="active site" description="Tele-phosphohistidine intermediate" evidence="1">
    <location>
        <position position="9"/>
    </location>
</feature>
<feature type="active site" description="Proton donor/acceptor" evidence="1">
    <location>
        <position position="82"/>
    </location>
</feature>
<feature type="binding site" evidence="1">
    <location>
        <begin position="8"/>
        <end position="15"/>
    </location>
    <ligand>
        <name>substrate</name>
    </ligand>
</feature>
<feature type="binding site" evidence="1">
    <location>
        <begin position="21"/>
        <end position="22"/>
    </location>
    <ligand>
        <name>substrate</name>
    </ligand>
</feature>
<feature type="binding site" evidence="1">
    <location>
        <position position="58"/>
    </location>
    <ligand>
        <name>substrate</name>
    </ligand>
</feature>
<feature type="binding site" evidence="1">
    <location>
        <position position="60"/>
    </location>
    <ligand>
        <name>substrate</name>
    </ligand>
</feature>
<feature type="binding site" evidence="1">
    <location>
        <begin position="82"/>
        <end position="85"/>
    </location>
    <ligand>
        <name>substrate</name>
    </ligand>
</feature>
<feature type="binding site" evidence="1">
    <location>
        <begin position="104"/>
        <end position="105"/>
    </location>
    <ligand>
        <name>substrate</name>
    </ligand>
</feature>
<feature type="binding site" evidence="1">
    <location>
        <begin position="151"/>
        <end position="152"/>
    </location>
    <ligand>
        <name>substrate</name>
    </ligand>
</feature>
<feature type="site" description="Transition state stabilizer" evidence="1">
    <location>
        <position position="150"/>
    </location>
</feature>
<accession>B5Y264</accession>
<proteinExistence type="inferred from homology"/>
<protein>
    <recommendedName>
        <fullName evidence="1">Probable phosphoglycerate mutase GpmB</fullName>
        <ecNumber evidence="1">5.4.2.-</ecNumber>
    </recommendedName>
    <alternativeName>
        <fullName evidence="1">PGAM</fullName>
    </alternativeName>
    <alternativeName>
        <fullName evidence="1">Phosphoglyceromutase</fullName>
    </alternativeName>
</protein>
<reference key="1">
    <citation type="journal article" date="2008" name="PLoS Genet.">
        <title>Complete genome sequence of the N2-fixing broad host range endophyte Klebsiella pneumoniae 342 and virulence predictions verified in mice.</title>
        <authorList>
            <person name="Fouts D.E."/>
            <person name="Tyler H.L."/>
            <person name="DeBoy R.T."/>
            <person name="Daugherty S."/>
            <person name="Ren Q."/>
            <person name="Badger J.H."/>
            <person name="Durkin A.S."/>
            <person name="Huot H."/>
            <person name="Shrivastava S."/>
            <person name="Kothari S."/>
            <person name="Dodson R.J."/>
            <person name="Mohamoud Y."/>
            <person name="Khouri H."/>
            <person name="Roesch L.F.W."/>
            <person name="Krogfelt K.A."/>
            <person name="Struve C."/>
            <person name="Triplett E.W."/>
            <person name="Methe B.A."/>
        </authorList>
    </citation>
    <scope>NUCLEOTIDE SEQUENCE [LARGE SCALE GENOMIC DNA]</scope>
    <source>
        <strain>342</strain>
    </source>
</reference>
<keyword id="KW-0324">Glycolysis</keyword>
<keyword id="KW-0413">Isomerase</keyword>
<comment type="catalytic activity">
    <reaction evidence="1">
        <text>(2R)-2-phosphoglycerate = (2R)-3-phosphoglycerate</text>
        <dbReference type="Rhea" id="RHEA:15901"/>
        <dbReference type="ChEBI" id="CHEBI:58272"/>
        <dbReference type="ChEBI" id="CHEBI:58289"/>
    </reaction>
</comment>
<comment type="pathway">
    <text evidence="1">Carbohydrate degradation; glycolysis; pyruvate from D-glyceraldehyde 3-phosphate: step 3/5.</text>
</comment>
<comment type="similarity">
    <text evidence="1">Belongs to the phosphoglycerate mutase family. GpmB subfamily.</text>
</comment>
<sequence>MLQVYLVRHGETQWNAERRIQGQSDSPLTAHGERQAWQVGERARTLGITHIITSDLGRTRRTAEIIAEACGCSVIADARLRELDMGVLEKRHIDSLSDEEEGWRRQLVNGTPDGRIPQGESMQELSERMHAALASCLELPAGSRPLLVSHGIALGCLVSTILGLPAYAERRLRLRNCSISRVDYQQSPWLASGWVVETAGDVSHLDAPAMDELQR</sequence>
<name>GPMB_KLEP3</name>
<organism>
    <name type="scientific">Klebsiella pneumoniae (strain 342)</name>
    <dbReference type="NCBI Taxonomy" id="507522"/>
    <lineage>
        <taxon>Bacteria</taxon>
        <taxon>Pseudomonadati</taxon>
        <taxon>Pseudomonadota</taxon>
        <taxon>Gammaproteobacteria</taxon>
        <taxon>Enterobacterales</taxon>
        <taxon>Enterobacteriaceae</taxon>
        <taxon>Klebsiella/Raoultella group</taxon>
        <taxon>Klebsiella</taxon>
        <taxon>Klebsiella pneumoniae complex</taxon>
    </lineage>
</organism>
<evidence type="ECO:0000255" key="1">
    <source>
        <dbReference type="HAMAP-Rule" id="MF_01040"/>
    </source>
</evidence>
<gene>
    <name evidence="1" type="primary">gpmB</name>
    <name type="ordered locus">KPK_4763</name>
</gene>
<dbReference type="EC" id="5.4.2.-" evidence="1"/>
<dbReference type="EMBL" id="CP000964">
    <property type="protein sequence ID" value="ACI09056.1"/>
    <property type="molecule type" value="Genomic_DNA"/>
</dbReference>
<dbReference type="SMR" id="B5Y264"/>
<dbReference type="KEGG" id="kpe:KPK_4763"/>
<dbReference type="HOGENOM" id="CLU_033323_9_5_6"/>
<dbReference type="UniPathway" id="UPA00109">
    <property type="reaction ID" value="UER00186"/>
</dbReference>
<dbReference type="Proteomes" id="UP000001734">
    <property type="component" value="Chromosome"/>
</dbReference>
<dbReference type="GO" id="GO:0005737">
    <property type="term" value="C:cytoplasm"/>
    <property type="evidence" value="ECO:0007669"/>
    <property type="project" value="TreeGrafter"/>
</dbReference>
<dbReference type="GO" id="GO:0016791">
    <property type="term" value="F:phosphatase activity"/>
    <property type="evidence" value="ECO:0007669"/>
    <property type="project" value="TreeGrafter"/>
</dbReference>
<dbReference type="GO" id="GO:0004619">
    <property type="term" value="F:phosphoglycerate mutase activity"/>
    <property type="evidence" value="ECO:0007669"/>
    <property type="project" value="UniProtKB-UniRule"/>
</dbReference>
<dbReference type="GO" id="GO:0006096">
    <property type="term" value="P:glycolytic process"/>
    <property type="evidence" value="ECO:0007669"/>
    <property type="project" value="UniProtKB-UniRule"/>
</dbReference>
<dbReference type="CDD" id="cd07067">
    <property type="entry name" value="HP_PGM_like"/>
    <property type="match status" value="1"/>
</dbReference>
<dbReference type="Gene3D" id="3.40.50.1240">
    <property type="entry name" value="Phosphoglycerate mutase-like"/>
    <property type="match status" value="1"/>
</dbReference>
<dbReference type="HAMAP" id="MF_01040">
    <property type="entry name" value="PGAM_GpmB"/>
    <property type="match status" value="1"/>
</dbReference>
<dbReference type="InterPro" id="IPR013078">
    <property type="entry name" value="His_Pase_superF_clade-1"/>
</dbReference>
<dbReference type="InterPro" id="IPR029033">
    <property type="entry name" value="His_PPase_superfam"/>
</dbReference>
<dbReference type="InterPro" id="IPR001345">
    <property type="entry name" value="PG/BPGM_mutase_AS"/>
</dbReference>
<dbReference type="InterPro" id="IPR050275">
    <property type="entry name" value="PGM_Phosphatase"/>
</dbReference>
<dbReference type="InterPro" id="IPR023086">
    <property type="entry name" value="Phosphoglycerate_mutase_GpmB"/>
</dbReference>
<dbReference type="NCBIfam" id="NF002901">
    <property type="entry name" value="PRK03482.1"/>
    <property type="match status" value="1"/>
</dbReference>
<dbReference type="PANTHER" id="PTHR48100">
    <property type="entry name" value="BROAD-SPECIFICITY PHOSPHATASE YOR283W-RELATED"/>
    <property type="match status" value="1"/>
</dbReference>
<dbReference type="PANTHER" id="PTHR48100:SF1">
    <property type="entry name" value="HISTIDINE PHOSPHATASE FAMILY PROTEIN-RELATED"/>
    <property type="match status" value="1"/>
</dbReference>
<dbReference type="Pfam" id="PF00300">
    <property type="entry name" value="His_Phos_1"/>
    <property type="match status" value="1"/>
</dbReference>
<dbReference type="SMART" id="SM00855">
    <property type="entry name" value="PGAM"/>
    <property type="match status" value="1"/>
</dbReference>
<dbReference type="SUPFAM" id="SSF53254">
    <property type="entry name" value="Phosphoglycerate mutase-like"/>
    <property type="match status" value="1"/>
</dbReference>
<dbReference type="PROSITE" id="PS00175">
    <property type="entry name" value="PG_MUTASE"/>
    <property type="match status" value="1"/>
</dbReference>